<sequence length="383" mass="43882">MVVTFLQDLEVLQDALLNNLQKLSAISRRKESGESKHDNKDSFAAIANEHNDEEEEIEFEDLVNIIESKVSDFESVLKCSIVEMTYKYPELKLQWEKSPRYDQCDKLHIVKLDKQMNEDIYAQLVEELDFVLQFVDWFYCYRLKVKEILRQHHKRDLAWNDEKRDRAIKFHAVDYDKLHQGTSSSSSLTSTSMEKASTREKLLSKTKQLTNNLVRGNQILQSGILQSDLNLDELRAQTNSLTQIDDKYTQFETVFKKTADLVKVLENASHQEKRDVYLSLGFLLCCVSWVLWRRIFKLPVKLGLWLLFKFFKGILVTLGLVKSYAGSSSSLQAPSLVLNAPILATTTTSSATSVEPFASVSAVSSIQRAVDEAVDRIVSHDEL</sequence>
<reference key="1">
    <citation type="journal article" date="1992" name="EMBO J.">
        <title>The Saccharomyces cerevisiae SEC20 gene encodes a membrane glycoprotein which is sorted by the HDEL retrieval system.</title>
        <authorList>
            <person name="Sweet D.J."/>
            <person name="Pelham H.R.B."/>
        </authorList>
    </citation>
    <scope>NUCLEOTIDE SEQUENCE [GENOMIC DNA]</scope>
    <scope>SUBCELLULAR LOCATION</scope>
    <scope>TOPOLOGY</scope>
</reference>
<reference key="2">
    <citation type="journal article" date="1997" name="Nature">
        <title>The nucleotide sequence of Saccharomyces cerevisiae chromosome IV.</title>
        <authorList>
            <person name="Jacq C."/>
            <person name="Alt-Moerbe J."/>
            <person name="Andre B."/>
            <person name="Arnold W."/>
            <person name="Bahr A."/>
            <person name="Ballesta J.P.G."/>
            <person name="Bargues M."/>
            <person name="Baron L."/>
            <person name="Becker A."/>
            <person name="Biteau N."/>
            <person name="Bloecker H."/>
            <person name="Blugeon C."/>
            <person name="Boskovic J."/>
            <person name="Brandt P."/>
            <person name="Brueckner M."/>
            <person name="Buitrago M.J."/>
            <person name="Coster F."/>
            <person name="Delaveau T."/>
            <person name="del Rey F."/>
            <person name="Dujon B."/>
            <person name="Eide L.G."/>
            <person name="Garcia-Cantalejo J.M."/>
            <person name="Goffeau A."/>
            <person name="Gomez-Peris A."/>
            <person name="Granotier C."/>
            <person name="Hanemann V."/>
            <person name="Hankeln T."/>
            <person name="Hoheisel J.D."/>
            <person name="Jaeger W."/>
            <person name="Jimenez A."/>
            <person name="Jonniaux J.-L."/>
            <person name="Kraemer C."/>
            <person name="Kuester H."/>
            <person name="Laamanen P."/>
            <person name="Legros Y."/>
            <person name="Louis E.J."/>
            <person name="Moeller-Rieker S."/>
            <person name="Monnet A."/>
            <person name="Moro M."/>
            <person name="Mueller-Auer S."/>
            <person name="Nussbaumer B."/>
            <person name="Paricio N."/>
            <person name="Paulin L."/>
            <person name="Perea J."/>
            <person name="Perez-Alonso M."/>
            <person name="Perez-Ortin J.E."/>
            <person name="Pohl T.M."/>
            <person name="Prydz H."/>
            <person name="Purnelle B."/>
            <person name="Rasmussen S.W."/>
            <person name="Remacha M.A."/>
            <person name="Revuelta J.L."/>
            <person name="Rieger M."/>
            <person name="Salom D."/>
            <person name="Saluz H.P."/>
            <person name="Saiz J.E."/>
            <person name="Saren A.-M."/>
            <person name="Schaefer M."/>
            <person name="Scharfe M."/>
            <person name="Schmidt E.R."/>
            <person name="Schneider C."/>
            <person name="Scholler P."/>
            <person name="Schwarz S."/>
            <person name="Soler-Mira A."/>
            <person name="Urrestarazu L.A."/>
            <person name="Verhasselt P."/>
            <person name="Vissers S."/>
            <person name="Voet M."/>
            <person name="Volckaert G."/>
            <person name="Wagner G."/>
            <person name="Wambutt R."/>
            <person name="Wedler E."/>
            <person name="Wedler H."/>
            <person name="Woelfl S."/>
            <person name="Harris D.E."/>
            <person name="Bowman S."/>
            <person name="Brown D."/>
            <person name="Churcher C.M."/>
            <person name="Connor R."/>
            <person name="Dedman K."/>
            <person name="Gentles S."/>
            <person name="Hamlin N."/>
            <person name="Hunt S."/>
            <person name="Jones L."/>
            <person name="McDonald S."/>
            <person name="Murphy L.D."/>
            <person name="Niblett D."/>
            <person name="Odell C."/>
            <person name="Oliver K."/>
            <person name="Rajandream M.A."/>
            <person name="Richards C."/>
            <person name="Shore L."/>
            <person name="Walsh S.V."/>
            <person name="Barrell B.G."/>
            <person name="Dietrich F.S."/>
            <person name="Mulligan J.T."/>
            <person name="Allen E."/>
            <person name="Araujo R."/>
            <person name="Aviles E."/>
            <person name="Berno A."/>
            <person name="Carpenter J."/>
            <person name="Chen E."/>
            <person name="Cherry J.M."/>
            <person name="Chung E."/>
            <person name="Duncan M."/>
            <person name="Hunicke-Smith S."/>
            <person name="Hyman R.W."/>
            <person name="Komp C."/>
            <person name="Lashkari D."/>
            <person name="Lew H."/>
            <person name="Lin D."/>
            <person name="Mosedale D."/>
            <person name="Nakahara K."/>
            <person name="Namath A."/>
            <person name="Oefner P."/>
            <person name="Oh C."/>
            <person name="Petel F.X."/>
            <person name="Roberts D."/>
            <person name="Schramm S."/>
            <person name="Schroeder M."/>
            <person name="Shogren T."/>
            <person name="Shroff N."/>
            <person name="Winant A."/>
            <person name="Yelton M.A."/>
            <person name="Botstein D."/>
            <person name="Davis R.W."/>
            <person name="Johnston M."/>
            <person name="Andrews S."/>
            <person name="Brinkman R."/>
            <person name="Cooper J."/>
            <person name="Ding H."/>
            <person name="Du Z."/>
            <person name="Favello A."/>
            <person name="Fulton L."/>
            <person name="Gattung S."/>
            <person name="Greco T."/>
            <person name="Hallsworth K."/>
            <person name="Hawkins J."/>
            <person name="Hillier L.W."/>
            <person name="Jier M."/>
            <person name="Johnson D."/>
            <person name="Johnston L."/>
            <person name="Kirsten J."/>
            <person name="Kucaba T."/>
            <person name="Langston Y."/>
            <person name="Latreille P."/>
            <person name="Le T."/>
            <person name="Mardis E."/>
            <person name="Menezes S."/>
            <person name="Miller N."/>
            <person name="Nhan M."/>
            <person name="Pauley A."/>
            <person name="Peluso D."/>
            <person name="Rifkin L."/>
            <person name="Riles L."/>
            <person name="Taich A."/>
            <person name="Trevaskis E."/>
            <person name="Vignati D."/>
            <person name="Wilcox L."/>
            <person name="Wohldman P."/>
            <person name="Vaudin M."/>
            <person name="Wilson R."/>
            <person name="Waterston R."/>
            <person name="Albermann K."/>
            <person name="Hani J."/>
            <person name="Heumann K."/>
            <person name="Kleine K."/>
            <person name="Mewes H.-W."/>
            <person name="Zollner A."/>
            <person name="Zaccaria P."/>
        </authorList>
    </citation>
    <scope>NUCLEOTIDE SEQUENCE [LARGE SCALE GENOMIC DNA]</scope>
    <source>
        <strain>ATCC 204508 / S288c</strain>
    </source>
</reference>
<reference key="3">
    <citation type="journal article" date="2014" name="G3 (Bethesda)">
        <title>The reference genome sequence of Saccharomyces cerevisiae: Then and now.</title>
        <authorList>
            <person name="Engel S.R."/>
            <person name="Dietrich F.S."/>
            <person name="Fisk D.G."/>
            <person name="Binkley G."/>
            <person name="Balakrishnan R."/>
            <person name="Costanzo M.C."/>
            <person name="Dwight S.S."/>
            <person name="Hitz B.C."/>
            <person name="Karra K."/>
            <person name="Nash R.S."/>
            <person name="Weng S."/>
            <person name="Wong E.D."/>
            <person name="Lloyd P."/>
            <person name="Skrzypek M.S."/>
            <person name="Miyasato S.R."/>
            <person name="Simison M."/>
            <person name="Cherry J.M."/>
        </authorList>
    </citation>
    <scope>GENOME REANNOTATION</scope>
    <source>
        <strain>ATCC 204508 / S288c</strain>
    </source>
</reference>
<reference key="4">
    <citation type="journal article" date="2007" name="Genome Res.">
        <title>Approaching a complete repository of sequence-verified protein-encoding clones for Saccharomyces cerevisiae.</title>
        <authorList>
            <person name="Hu Y."/>
            <person name="Rolfs A."/>
            <person name="Bhullar B."/>
            <person name="Murthy T.V.S."/>
            <person name="Zhu C."/>
            <person name="Berger M.F."/>
            <person name="Camargo A.A."/>
            <person name="Kelley F."/>
            <person name="McCarron S."/>
            <person name="Jepson D."/>
            <person name="Richardson A."/>
            <person name="Raphael J."/>
            <person name="Moreira D."/>
            <person name="Taycher E."/>
            <person name="Zuo D."/>
            <person name="Mohr S."/>
            <person name="Kane M.F."/>
            <person name="Williamson J."/>
            <person name="Simpson A.J.G."/>
            <person name="Bulyk M.L."/>
            <person name="Harlow E."/>
            <person name="Marsischky G."/>
            <person name="Kolodner R.D."/>
            <person name="LaBaer J."/>
        </authorList>
    </citation>
    <scope>NUCLEOTIDE SEQUENCE [GENOMIC DNA]</scope>
    <source>
        <strain>ATCC 204508 / S288c</strain>
    </source>
</reference>
<reference key="5">
    <citation type="journal article" date="2003" name="EMBO J.">
        <title>Use1p is a yeast SNARE protein required for retrograde traffic to the ER.</title>
        <authorList>
            <person name="Dilcher M."/>
            <person name="Veith B."/>
            <person name="Chidambaram S."/>
            <person name="Hartmann E."/>
            <person name="Schmitt H.D."/>
            <person name="Fischer von Mollard G."/>
        </authorList>
    </citation>
    <scope>FUNCTION</scope>
    <scope>INTERACTION WITH UFE1; SEC22 AND USE1</scope>
</reference>
<reference key="6">
    <citation type="journal article" date="2003" name="Nature">
        <title>Global analysis of protein expression in yeast.</title>
        <authorList>
            <person name="Ghaemmaghami S."/>
            <person name="Huh W.-K."/>
            <person name="Bower K."/>
            <person name="Howson R.W."/>
            <person name="Belle A."/>
            <person name="Dephoure N."/>
            <person name="O'Shea E.K."/>
            <person name="Weissman J.S."/>
        </authorList>
    </citation>
    <scope>LEVEL OF PROTEIN EXPRESSION [LARGE SCALE ANALYSIS]</scope>
</reference>
<accession>P28791</accession>
<accession>D6VTC0</accession>
<dbReference type="EMBL" id="X60215">
    <property type="protein sequence ID" value="CAA42776.1"/>
    <property type="molecule type" value="Genomic_DNA"/>
</dbReference>
<dbReference type="EMBL" id="U33057">
    <property type="protein sequence ID" value="AAB64940.1"/>
    <property type="molecule type" value="Genomic_DNA"/>
</dbReference>
<dbReference type="EMBL" id="AY693133">
    <property type="protein sequence ID" value="AAT93152.1"/>
    <property type="molecule type" value="Genomic_DNA"/>
</dbReference>
<dbReference type="EMBL" id="BK006938">
    <property type="protein sequence ID" value="DAA12330.1"/>
    <property type="molecule type" value="Genomic_DNA"/>
</dbReference>
<dbReference type="PIR" id="S19633">
    <property type="entry name" value="S19633"/>
</dbReference>
<dbReference type="RefSeq" id="NP_010786.3">
    <property type="nucleotide sequence ID" value="NM_001180806.3"/>
</dbReference>
<dbReference type="PDB" id="8EKI">
    <property type="method" value="EM"/>
    <property type="resolution" value="4.50 A"/>
    <property type="chains" value="A=1-275"/>
</dbReference>
<dbReference type="PDBsum" id="8EKI"/>
<dbReference type="EMDB" id="EMD-28204"/>
<dbReference type="SMR" id="P28791"/>
<dbReference type="BioGRID" id="32549">
    <property type="interactions" value="422"/>
</dbReference>
<dbReference type="ComplexPortal" id="CPX-5304">
    <property type="entry name" value="Endoplasmic reticulum snare complex UFE1-USE1-SEC20-SEC22"/>
</dbReference>
<dbReference type="DIP" id="DIP-5844N"/>
<dbReference type="FunCoup" id="P28791">
    <property type="interactions" value="74"/>
</dbReference>
<dbReference type="IntAct" id="P28791">
    <property type="interactions" value="15"/>
</dbReference>
<dbReference type="MINT" id="P28791"/>
<dbReference type="STRING" id="4932.YDR498C"/>
<dbReference type="iPTMnet" id="P28791"/>
<dbReference type="PaxDb" id="4932-YDR498C"/>
<dbReference type="PeptideAtlas" id="P28791"/>
<dbReference type="TopDownProteomics" id="P28791"/>
<dbReference type="EnsemblFungi" id="YDR498C_mRNA">
    <property type="protein sequence ID" value="YDR498C"/>
    <property type="gene ID" value="YDR498C"/>
</dbReference>
<dbReference type="GeneID" id="852109"/>
<dbReference type="KEGG" id="sce:YDR498C"/>
<dbReference type="AGR" id="SGD:S000002906"/>
<dbReference type="SGD" id="S000002906">
    <property type="gene designation" value="SEC20"/>
</dbReference>
<dbReference type="VEuPathDB" id="FungiDB:YDR498C"/>
<dbReference type="eggNOG" id="ENOG502S7WD">
    <property type="taxonomic scope" value="Eukaryota"/>
</dbReference>
<dbReference type="GeneTree" id="ENSGT00390000014412"/>
<dbReference type="HOGENOM" id="CLU_046734_0_0_1"/>
<dbReference type="InParanoid" id="P28791"/>
<dbReference type="OMA" id="FINDIRL"/>
<dbReference type="OrthoDB" id="46868at2759"/>
<dbReference type="BioCyc" id="YEAST:G3O-30021-MONOMER"/>
<dbReference type="Reactome" id="R-SCE-6811434">
    <property type="pathway name" value="COPI-dependent Golgi-to-ER retrograde traffic"/>
</dbReference>
<dbReference type="BioGRID-ORCS" id="852109">
    <property type="hits" value="4 hits in 10 CRISPR screens"/>
</dbReference>
<dbReference type="PRO" id="PR:P28791"/>
<dbReference type="Proteomes" id="UP000002311">
    <property type="component" value="Chromosome IV"/>
</dbReference>
<dbReference type="RNAct" id="P28791">
    <property type="molecule type" value="protein"/>
</dbReference>
<dbReference type="GO" id="GO:0098554">
    <property type="term" value="C:cytoplasmic side of endoplasmic reticulum membrane"/>
    <property type="evidence" value="ECO:0000303"/>
    <property type="project" value="ComplexPortal"/>
</dbReference>
<dbReference type="GO" id="GO:0005783">
    <property type="term" value="C:endoplasmic reticulum"/>
    <property type="evidence" value="ECO:0000314"/>
    <property type="project" value="SGD"/>
</dbReference>
<dbReference type="GO" id="GO:0012508">
    <property type="term" value="C:Golgi to ER transport vesicle membrane"/>
    <property type="evidence" value="ECO:0000303"/>
    <property type="project" value="ComplexPortal"/>
</dbReference>
<dbReference type="GO" id="GO:0016020">
    <property type="term" value="C:membrane"/>
    <property type="evidence" value="ECO:0000314"/>
    <property type="project" value="SGD"/>
</dbReference>
<dbReference type="GO" id="GO:0031201">
    <property type="term" value="C:SNARE complex"/>
    <property type="evidence" value="ECO:0000314"/>
    <property type="project" value="SGD"/>
</dbReference>
<dbReference type="GO" id="GO:0005484">
    <property type="term" value="F:SNAP receptor activity"/>
    <property type="evidence" value="ECO:0000255"/>
    <property type="project" value="SGD"/>
</dbReference>
<dbReference type="GO" id="GO:0015031">
    <property type="term" value="P:protein transport"/>
    <property type="evidence" value="ECO:0007669"/>
    <property type="project" value="UniProtKB-KW"/>
</dbReference>
<dbReference type="GO" id="GO:0006890">
    <property type="term" value="P:retrograde vesicle-mediated transport, Golgi to endoplasmic reticulum"/>
    <property type="evidence" value="ECO:0000315"/>
    <property type="project" value="SGD"/>
</dbReference>
<dbReference type="GO" id="GO:0048279">
    <property type="term" value="P:vesicle fusion with endoplasmic reticulum"/>
    <property type="evidence" value="ECO:0000303"/>
    <property type="project" value="ComplexPortal"/>
</dbReference>
<dbReference type="CDD" id="cd15865">
    <property type="entry name" value="SNARE_SEC20"/>
    <property type="match status" value="1"/>
</dbReference>
<dbReference type="InterPro" id="IPR005606">
    <property type="entry name" value="Sec20"/>
</dbReference>
<dbReference type="InterPro" id="IPR056173">
    <property type="entry name" value="Sec20_C"/>
</dbReference>
<dbReference type="PANTHER" id="PTHR12825">
    <property type="entry name" value="BNIP1-RELATED"/>
    <property type="match status" value="1"/>
</dbReference>
<dbReference type="PANTHER" id="PTHR12825:SF0">
    <property type="entry name" value="VESICLE TRANSPORT PROTEIN SEC20"/>
    <property type="match status" value="1"/>
</dbReference>
<dbReference type="Pfam" id="PF03908">
    <property type="entry name" value="Sec20"/>
    <property type="match status" value="1"/>
</dbReference>
<dbReference type="PROSITE" id="PS00014">
    <property type="entry name" value="ER_TARGET"/>
    <property type="match status" value="1"/>
</dbReference>
<evidence type="ECO:0000255" key="1"/>
<evidence type="ECO:0000255" key="2">
    <source>
        <dbReference type="PROSITE-ProRule" id="PRU10138"/>
    </source>
</evidence>
<evidence type="ECO:0000269" key="3">
    <source>
    </source>
</evidence>
<evidence type="ECO:0000269" key="4">
    <source>
    </source>
</evidence>
<evidence type="ECO:0000269" key="5">
    <source>
    </source>
</evidence>
<evidence type="ECO:0000305" key="6"/>
<proteinExistence type="evidence at protein level"/>
<keyword id="KW-0002">3D-structure</keyword>
<keyword id="KW-0175">Coiled coil</keyword>
<keyword id="KW-0256">Endoplasmic reticulum</keyword>
<keyword id="KW-0931">ER-Golgi transport</keyword>
<keyword id="KW-0325">Glycoprotein</keyword>
<keyword id="KW-0472">Membrane</keyword>
<keyword id="KW-0653">Protein transport</keyword>
<keyword id="KW-1185">Reference proteome</keyword>
<keyword id="KW-0812">Transmembrane</keyword>
<keyword id="KW-1133">Transmembrane helix</keyword>
<keyword id="KW-0813">Transport</keyword>
<organism>
    <name type="scientific">Saccharomyces cerevisiae (strain ATCC 204508 / S288c)</name>
    <name type="common">Baker's yeast</name>
    <dbReference type="NCBI Taxonomy" id="559292"/>
    <lineage>
        <taxon>Eukaryota</taxon>
        <taxon>Fungi</taxon>
        <taxon>Dikarya</taxon>
        <taxon>Ascomycota</taxon>
        <taxon>Saccharomycotina</taxon>
        <taxon>Saccharomycetes</taxon>
        <taxon>Saccharomycetales</taxon>
        <taxon>Saccharomycetaceae</taxon>
        <taxon>Saccharomyces</taxon>
    </lineage>
</organism>
<name>SEC20_YEAST</name>
<comment type="function">
    <text evidence="3">SNARE required for targeting and fusion of Golgi-derived retrograde transport vesicles with the ER.</text>
</comment>
<comment type="subunit">
    <text evidence="3">Component of a SNARE complex consisting of UFE1, USE1, SEC20 and SEC22 or YKT6. Interacts with TIP20 through its cytoplasmic domain.</text>
</comment>
<comment type="interaction">
    <interactant intactId="EBI-16572">
        <id>P28791</id>
    </interactant>
    <interactant intactId="EBI-16577">
        <id>P22214</id>
        <label>SEC22</label>
    </interactant>
    <organismsDiffer>false</organismsDiffer>
    <experiments>4</experiments>
</comment>
<comment type="interaction">
    <interactant intactId="EBI-16572">
        <id>P28791</id>
    </interactant>
    <interactant intactId="EBI-19396">
        <id>P33891</id>
        <label>TIP20</label>
    </interactant>
    <organismsDiffer>false</organismsDiffer>
    <experiments>9</experiments>
</comment>
<comment type="interaction">
    <interactant intactId="EBI-16572">
        <id>P28791</id>
    </interactant>
    <interactant intactId="EBI-20016">
        <id>P41834</id>
        <label>UFE1</label>
    </interactant>
    <organismsDiffer>false</organismsDiffer>
    <experiments>6</experiments>
</comment>
<comment type="interaction">
    <interactant intactId="EBI-16572">
        <id>P28791</id>
    </interactant>
    <interactant intactId="EBI-23881">
        <id>P53146</id>
        <label>USE1</label>
    </interactant>
    <organismsDiffer>false</organismsDiffer>
    <experiments>5</experiments>
</comment>
<comment type="subcellular location">
    <subcellularLocation>
        <location evidence="2 5">Endoplasmic reticulum membrane</location>
        <topology evidence="5">Single-pass type IV membrane protein</topology>
    </subcellularLocation>
</comment>
<comment type="PTM">
    <text evidence="6">O-glycosylated, but not N-glycosylated.</text>
</comment>
<comment type="miscellaneous">
    <text evidence="4">Present with 4910 molecules/cell in log phase SD medium.</text>
</comment>
<comment type="similarity">
    <text evidence="6">Belongs to the SEC20 family.</text>
</comment>
<gene>
    <name type="primary">SEC20</name>
    <name type="ordered locus">YDR498C</name>
    <name type="ORF">D9719.4</name>
</gene>
<feature type="chain" id="PRO_0000097659" description="Protein transport protein SEC20">
    <location>
        <begin position="1"/>
        <end position="383"/>
    </location>
</feature>
<feature type="topological domain" description="Cytoplasmic" evidence="1">
    <location>
        <begin position="1"/>
        <end position="275"/>
    </location>
</feature>
<feature type="transmembrane region" description="Helical; Anchor for type IV membrane protein">
    <location>
        <begin position="276"/>
        <end position="292"/>
    </location>
</feature>
<feature type="topological domain" description="Lumenal" evidence="1">
    <location>
        <begin position="293"/>
        <end position="383"/>
    </location>
</feature>
<feature type="coiled-coil region" evidence="1">
    <location>
        <begin position="6"/>
        <end position="26"/>
    </location>
</feature>
<feature type="short sequence motif" description="Prevents secretion from ER">
    <location>
        <begin position="380"/>
        <end position="383"/>
    </location>
</feature>
<protein>
    <recommendedName>
        <fullName>Protein transport protein SEC20</fullName>
    </recommendedName>
</protein>